<keyword id="KW-0066">ATP synthesis</keyword>
<keyword id="KW-1003">Cell membrane</keyword>
<keyword id="KW-0375">Hydrogen ion transport</keyword>
<keyword id="KW-0406">Ion transport</keyword>
<keyword id="KW-0472">Membrane</keyword>
<keyword id="KW-1185">Reference proteome</keyword>
<keyword id="KW-0813">Transport</keyword>
<protein>
    <recommendedName>
        <fullName evidence="1">A-type ATP synthase subunit D</fullName>
    </recommendedName>
</protein>
<sequence length="228" mass="25825">MAKDVKPTRKNLMAIEDRIDLSERGHDTLEQKRDGLIMEFMDILDQAQDVRSDVSENYETAQRKIDMARAMEGDVAVRGAAAALKEHPEITTQSKNIMGVVVPQIESSKVKKSLDERGYGLLGSSARIDEAADAYEELLEKVILAAEVETAMKKMLTEIETTKRRVNALEFTLLPRLYENQEYIEQKLEEQEREEIFRLKKIKAKKEEEEKAEAAAEAAAVEDPEPAD</sequence>
<reference key="1">
    <citation type="journal article" date="2016" name="Stand. Genomic Sci.">
        <title>Complete genome sequence of the Antarctic Halorubrum lacusprofundi type strain ACAM 34.</title>
        <authorList>
            <person name="Anderson I.J."/>
            <person name="DasSarma P."/>
            <person name="Lucas S."/>
            <person name="Copeland A."/>
            <person name="Lapidus A."/>
            <person name="Del Rio T.G."/>
            <person name="Tice H."/>
            <person name="Dalin E."/>
            <person name="Bruce D.C."/>
            <person name="Goodwin L."/>
            <person name="Pitluck S."/>
            <person name="Sims D."/>
            <person name="Brettin T.S."/>
            <person name="Detter J.C."/>
            <person name="Han C.S."/>
            <person name="Larimer F."/>
            <person name="Hauser L."/>
            <person name="Land M."/>
            <person name="Ivanova N."/>
            <person name="Richardson P."/>
            <person name="Cavicchioli R."/>
            <person name="DasSarma S."/>
            <person name="Woese C.R."/>
            <person name="Kyrpides N.C."/>
        </authorList>
    </citation>
    <scope>NUCLEOTIDE SEQUENCE [LARGE SCALE GENOMIC DNA]</scope>
    <source>
        <strain>ATCC 49239 / DSM 5036 / JCM 8891 / ACAM 34</strain>
    </source>
</reference>
<evidence type="ECO:0000255" key="1">
    <source>
        <dbReference type="HAMAP-Rule" id="MF_00271"/>
    </source>
</evidence>
<evidence type="ECO:0000256" key="2">
    <source>
        <dbReference type="SAM" id="MobiDB-lite"/>
    </source>
</evidence>
<accession>B9LS43</accession>
<organism>
    <name type="scientific">Halorubrum lacusprofundi (strain ATCC 49239 / DSM 5036 / JCM 8891 / ACAM 34)</name>
    <dbReference type="NCBI Taxonomy" id="416348"/>
    <lineage>
        <taxon>Archaea</taxon>
        <taxon>Methanobacteriati</taxon>
        <taxon>Methanobacteriota</taxon>
        <taxon>Stenosarchaea group</taxon>
        <taxon>Halobacteria</taxon>
        <taxon>Halobacteriales</taxon>
        <taxon>Haloferacaceae</taxon>
        <taxon>Halorubrum</taxon>
    </lineage>
</organism>
<name>AATD_HALLT</name>
<comment type="function">
    <text evidence="1">Component of the A-type ATP synthase that produces ATP from ADP in the presence of a proton gradient across the membrane.</text>
</comment>
<comment type="subunit">
    <text evidence="1">Has multiple subunits with at least A(3), B(3), C, D, E, F, H, I and proteolipid K(x).</text>
</comment>
<comment type="subcellular location">
    <subcellularLocation>
        <location evidence="1">Cell membrane</location>
        <topology evidence="1">Peripheral membrane protein</topology>
    </subcellularLocation>
</comment>
<comment type="similarity">
    <text evidence="1">Belongs to the V-ATPase D subunit family.</text>
</comment>
<proteinExistence type="inferred from homology"/>
<dbReference type="EMBL" id="CP001365">
    <property type="protein sequence ID" value="ACM55888.1"/>
    <property type="molecule type" value="Genomic_DNA"/>
</dbReference>
<dbReference type="RefSeq" id="WP_012659529.1">
    <property type="nucleotide sequence ID" value="NC_012029.1"/>
</dbReference>
<dbReference type="SMR" id="B9LS43"/>
<dbReference type="GeneID" id="7401209"/>
<dbReference type="KEGG" id="hla:Hlac_0283"/>
<dbReference type="eggNOG" id="arCOG04101">
    <property type="taxonomic scope" value="Archaea"/>
</dbReference>
<dbReference type="HOGENOM" id="CLU_069688_2_1_2"/>
<dbReference type="Proteomes" id="UP000000740">
    <property type="component" value="Chromosome 1"/>
</dbReference>
<dbReference type="GO" id="GO:0005886">
    <property type="term" value="C:plasma membrane"/>
    <property type="evidence" value="ECO:0007669"/>
    <property type="project" value="UniProtKB-SubCell"/>
</dbReference>
<dbReference type="GO" id="GO:0005524">
    <property type="term" value="F:ATP binding"/>
    <property type="evidence" value="ECO:0007669"/>
    <property type="project" value="UniProtKB-UniRule"/>
</dbReference>
<dbReference type="GO" id="GO:0046933">
    <property type="term" value="F:proton-transporting ATP synthase activity, rotational mechanism"/>
    <property type="evidence" value="ECO:0007669"/>
    <property type="project" value="UniProtKB-UniRule"/>
</dbReference>
<dbReference type="GO" id="GO:0046961">
    <property type="term" value="F:proton-transporting ATPase activity, rotational mechanism"/>
    <property type="evidence" value="ECO:0007669"/>
    <property type="project" value="InterPro"/>
</dbReference>
<dbReference type="GO" id="GO:0042777">
    <property type="term" value="P:proton motive force-driven plasma membrane ATP synthesis"/>
    <property type="evidence" value="ECO:0007669"/>
    <property type="project" value="UniProtKB-UniRule"/>
</dbReference>
<dbReference type="FunFam" id="1.10.287.3240:FF:000007">
    <property type="entry name" value="V-type ATP synthase subunit D"/>
    <property type="match status" value="1"/>
</dbReference>
<dbReference type="Gene3D" id="1.10.287.3240">
    <property type="match status" value="1"/>
</dbReference>
<dbReference type="HAMAP" id="MF_00271">
    <property type="entry name" value="ATP_synth_D_arch"/>
    <property type="match status" value="1"/>
</dbReference>
<dbReference type="InterPro" id="IPR002699">
    <property type="entry name" value="V_ATPase_D"/>
</dbReference>
<dbReference type="NCBIfam" id="NF001542">
    <property type="entry name" value="PRK00373.1-1"/>
    <property type="match status" value="1"/>
</dbReference>
<dbReference type="NCBIfam" id="NF001545">
    <property type="entry name" value="PRK00373.1-4"/>
    <property type="match status" value="1"/>
</dbReference>
<dbReference type="NCBIfam" id="TIGR00309">
    <property type="entry name" value="V_ATPase_subD"/>
    <property type="match status" value="1"/>
</dbReference>
<dbReference type="PANTHER" id="PTHR11671">
    <property type="entry name" value="V-TYPE ATP SYNTHASE SUBUNIT D"/>
    <property type="match status" value="1"/>
</dbReference>
<dbReference type="Pfam" id="PF01813">
    <property type="entry name" value="ATP-synt_D"/>
    <property type="match status" value="1"/>
</dbReference>
<gene>
    <name evidence="1" type="primary">atpD</name>
    <name type="ordered locus">Hlac_0283</name>
</gene>
<feature type="chain" id="PRO_1000173514" description="A-type ATP synthase subunit D">
    <location>
        <begin position="1"/>
        <end position="228"/>
    </location>
</feature>
<feature type="region of interest" description="Disordered" evidence="2">
    <location>
        <begin position="205"/>
        <end position="228"/>
    </location>
</feature>
<feature type="compositionally biased region" description="Basic and acidic residues" evidence="2">
    <location>
        <begin position="205"/>
        <end position="214"/>
    </location>
</feature>